<organism evidence="7">
    <name type="scientific">Mus musculus</name>
    <name type="common">Mouse</name>
    <dbReference type="NCBI Taxonomy" id="10090"/>
    <lineage>
        <taxon>Eukaryota</taxon>
        <taxon>Metazoa</taxon>
        <taxon>Chordata</taxon>
        <taxon>Craniata</taxon>
        <taxon>Vertebrata</taxon>
        <taxon>Euteleostomi</taxon>
        <taxon>Mammalia</taxon>
        <taxon>Eutheria</taxon>
        <taxon>Euarchontoglires</taxon>
        <taxon>Glires</taxon>
        <taxon>Rodentia</taxon>
        <taxon>Myomorpha</taxon>
        <taxon>Muroidea</taxon>
        <taxon>Muridae</taxon>
        <taxon>Murinae</taxon>
        <taxon>Mus</taxon>
        <taxon>Mus</taxon>
    </lineage>
</organism>
<name>DNHD1_MOUSE</name>
<dbReference type="EMBL" id="AK020222">
    <property type="protein sequence ID" value="BAB32030.1"/>
    <property type="status" value="ALT_INIT"/>
    <property type="molecule type" value="mRNA"/>
</dbReference>
<dbReference type="RefSeq" id="NP_001357732.1">
    <molecule id="D3Z2X2-1"/>
    <property type="nucleotide sequence ID" value="NM_001370803.1"/>
</dbReference>
<dbReference type="RefSeq" id="XP_006508445.1">
    <property type="nucleotide sequence ID" value="XM_006508382.1"/>
</dbReference>
<dbReference type="SMR" id="D3Z2X2"/>
<dbReference type="FunCoup" id="D3Z2X2">
    <property type="interactions" value="49"/>
</dbReference>
<dbReference type="STRING" id="10090.ENSMUSP00000121261"/>
<dbReference type="iPTMnet" id="D3Z2X2"/>
<dbReference type="PhosphoSitePlus" id="D3Z2X2"/>
<dbReference type="PaxDb" id="10090-ENSMUSP00000121261"/>
<dbReference type="ProteomicsDB" id="308745"/>
<dbReference type="ProteomicsDB" id="334743"/>
<dbReference type="Antibodypedia" id="48761">
    <property type="antibodies" value="18 antibodies from 7 providers"/>
</dbReference>
<dbReference type="GeneID" id="77505"/>
<dbReference type="AGR" id="MGI:1924755"/>
<dbReference type="MGI" id="MGI:1924755">
    <property type="gene designation" value="Dnhd1"/>
</dbReference>
<dbReference type="VEuPathDB" id="HostDB:ENSMUSG00000030882"/>
<dbReference type="eggNOG" id="KOG3595">
    <property type="taxonomic scope" value="Eukaryota"/>
</dbReference>
<dbReference type="HOGENOM" id="CLU_000038_0_3_1"/>
<dbReference type="InParanoid" id="D3Z2X2"/>
<dbReference type="PhylomeDB" id="D3Z2X2"/>
<dbReference type="TreeFam" id="TF332315"/>
<dbReference type="ChiTaRS" id="Dnhd1">
    <property type="organism name" value="mouse"/>
</dbReference>
<dbReference type="PRO" id="PR:D3Z2X2"/>
<dbReference type="Proteomes" id="UP000000589">
    <property type="component" value="Chromosome 7"/>
</dbReference>
<dbReference type="RNAct" id="D3Z2X2">
    <property type="molecule type" value="protein"/>
</dbReference>
<dbReference type="Bgee" id="ENSMUSG00000030882">
    <property type="expression patterns" value="Expressed in spermatocyte and 69 other cell types or tissues"/>
</dbReference>
<dbReference type="ExpressionAtlas" id="D3Z2X2">
    <property type="expression patterns" value="baseline and differential"/>
</dbReference>
<dbReference type="GO" id="GO:0030286">
    <property type="term" value="C:dynein complex"/>
    <property type="evidence" value="ECO:0007669"/>
    <property type="project" value="InterPro"/>
</dbReference>
<dbReference type="GO" id="GO:0036126">
    <property type="term" value="C:sperm flagellum"/>
    <property type="evidence" value="ECO:0000314"/>
    <property type="project" value="UniProtKB"/>
</dbReference>
<dbReference type="GO" id="GO:0005524">
    <property type="term" value="F:ATP binding"/>
    <property type="evidence" value="ECO:0007669"/>
    <property type="project" value="InterPro"/>
</dbReference>
<dbReference type="GO" id="GO:0045505">
    <property type="term" value="F:dynein intermediate chain binding"/>
    <property type="evidence" value="ECO:0007669"/>
    <property type="project" value="InterPro"/>
</dbReference>
<dbReference type="GO" id="GO:0051959">
    <property type="term" value="F:dynein light intermediate chain binding"/>
    <property type="evidence" value="ECO:0007669"/>
    <property type="project" value="InterPro"/>
</dbReference>
<dbReference type="GO" id="GO:0008569">
    <property type="term" value="F:minus-end-directed microtubule motor activity"/>
    <property type="evidence" value="ECO:0007669"/>
    <property type="project" value="InterPro"/>
</dbReference>
<dbReference type="GO" id="GO:0030317">
    <property type="term" value="P:flagellated sperm motility"/>
    <property type="evidence" value="ECO:0000315"/>
    <property type="project" value="UniProtKB"/>
</dbReference>
<dbReference type="GO" id="GO:0120316">
    <property type="term" value="P:sperm flagellum assembly"/>
    <property type="evidence" value="ECO:0000315"/>
    <property type="project" value="UniProtKB"/>
</dbReference>
<dbReference type="FunFam" id="1.20.140.100:FF:000008">
    <property type="entry name" value="Dynein heavy chain domain 1"/>
    <property type="match status" value="1"/>
</dbReference>
<dbReference type="FunFam" id="1.20.58.1120:FF:000010">
    <property type="entry name" value="Dynein heavy chain domain 1"/>
    <property type="match status" value="1"/>
</dbReference>
<dbReference type="FunFam" id="1.20.920.20:FF:000011">
    <property type="entry name" value="Dynein heavy chain domain 1"/>
    <property type="match status" value="1"/>
</dbReference>
<dbReference type="FunFam" id="1.20.920.30:FF:000008">
    <property type="entry name" value="Dynein heavy chain domain 1"/>
    <property type="match status" value="1"/>
</dbReference>
<dbReference type="FunFam" id="3.20.180.20:FF:000007">
    <property type="entry name" value="Dynein heavy chain domain 1"/>
    <property type="match status" value="1"/>
</dbReference>
<dbReference type="FunFam" id="3.40.50.300:FF:001411">
    <property type="entry name" value="Dynein heavy chain domain 1"/>
    <property type="match status" value="1"/>
</dbReference>
<dbReference type="FunFam" id="3.40.50.300:FF:001491">
    <property type="entry name" value="Dynein heavy chain domain 1"/>
    <property type="match status" value="1"/>
</dbReference>
<dbReference type="FunFam" id="3.40.50.300:FF:001540">
    <property type="entry name" value="Dynein heavy chain domain 1"/>
    <property type="match status" value="1"/>
</dbReference>
<dbReference type="FunFam" id="3.40.50.300:FF:001566">
    <property type="entry name" value="Dynein heavy chain domain 1"/>
    <property type="match status" value="1"/>
</dbReference>
<dbReference type="FunFam" id="3.40.50.300:FF:001336">
    <property type="entry name" value="Dynein heavy chain domain-containing protein 1"/>
    <property type="match status" value="1"/>
</dbReference>
<dbReference type="FunFam" id="1.10.8.720:FF:000018">
    <property type="entry name" value="Uncharacterized protein"/>
    <property type="match status" value="1"/>
</dbReference>
<dbReference type="Gene3D" id="1.10.472.130">
    <property type="match status" value="1"/>
</dbReference>
<dbReference type="Gene3D" id="1.20.58.1120">
    <property type="match status" value="1"/>
</dbReference>
<dbReference type="Gene3D" id="1.20.920.20">
    <property type="match status" value="1"/>
</dbReference>
<dbReference type="Gene3D" id="1.20.920.30">
    <property type="match status" value="1"/>
</dbReference>
<dbReference type="Gene3D" id="3.10.490.20">
    <property type="match status" value="1"/>
</dbReference>
<dbReference type="Gene3D" id="1.20.140.100">
    <property type="entry name" value="Dynein heavy chain, N-terminal domain 2"/>
    <property type="match status" value="1"/>
</dbReference>
<dbReference type="Gene3D" id="3.20.180.20">
    <property type="entry name" value="Dynein heavy chain, N-terminal domain 2"/>
    <property type="match status" value="1"/>
</dbReference>
<dbReference type="Gene3D" id="3.40.50.300">
    <property type="entry name" value="P-loop containing nucleotide triphosphate hydrolases"/>
    <property type="match status" value="6"/>
</dbReference>
<dbReference type="InterPro" id="IPR035699">
    <property type="entry name" value="AAA_6"/>
</dbReference>
<dbReference type="InterPro" id="IPR026983">
    <property type="entry name" value="DHC"/>
</dbReference>
<dbReference type="InterPro" id="IPR042222">
    <property type="entry name" value="Dynein_2_N"/>
</dbReference>
<dbReference type="InterPro" id="IPR041466">
    <property type="entry name" value="Dynein_AAA5_ext"/>
</dbReference>
<dbReference type="InterPro" id="IPR041228">
    <property type="entry name" value="Dynein_C"/>
</dbReference>
<dbReference type="InterPro" id="IPR043160">
    <property type="entry name" value="Dynein_C_barrel"/>
</dbReference>
<dbReference type="InterPro" id="IPR024743">
    <property type="entry name" value="Dynein_HC_stalk"/>
</dbReference>
<dbReference type="InterPro" id="IPR024317">
    <property type="entry name" value="Dynein_heavy_chain_D4_dom"/>
</dbReference>
<dbReference type="InterPro" id="IPR004273">
    <property type="entry name" value="Dynein_heavy_D6_P-loop"/>
</dbReference>
<dbReference type="InterPro" id="IPR013602">
    <property type="entry name" value="Dynein_heavy_linker"/>
</dbReference>
<dbReference type="InterPro" id="IPR042228">
    <property type="entry name" value="Dynein_linker_3"/>
</dbReference>
<dbReference type="InterPro" id="IPR027417">
    <property type="entry name" value="P-loop_NTPase"/>
</dbReference>
<dbReference type="PANTHER" id="PTHR10676:SF359">
    <property type="entry name" value="DYNEIN HEAVY CHAIN DOMAIN-CONTAINING PROTEIN 1"/>
    <property type="match status" value="1"/>
</dbReference>
<dbReference type="PANTHER" id="PTHR10676">
    <property type="entry name" value="DYNEIN HEAVY CHAIN FAMILY PROTEIN"/>
    <property type="match status" value="1"/>
</dbReference>
<dbReference type="Pfam" id="PF12774">
    <property type="entry name" value="AAA_6"/>
    <property type="match status" value="1"/>
</dbReference>
<dbReference type="Pfam" id="PF12775">
    <property type="entry name" value="AAA_7"/>
    <property type="match status" value="1"/>
</dbReference>
<dbReference type="Pfam" id="PF12780">
    <property type="entry name" value="AAA_8"/>
    <property type="match status" value="1"/>
</dbReference>
<dbReference type="Pfam" id="PF08393">
    <property type="entry name" value="DHC_N2"/>
    <property type="match status" value="1"/>
</dbReference>
<dbReference type="Pfam" id="PF17852">
    <property type="entry name" value="Dynein_AAA_lid"/>
    <property type="match status" value="1"/>
</dbReference>
<dbReference type="Pfam" id="PF18199">
    <property type="entry name" value="Dynein_C"/>
    <property type="match status" value="1"/>
</dbReference>
<dbReference type="Pfam" id="PF03028">
    <property type="entry name" value="Dynein_heavy"/>
    <property type="match status" value="1"/>
</dbReference>
<dbReference type="Pfam" id="PF12777">
    <property type="entry name" value="MT"/>
    <property type="match status" value="1"/>
</dbReference>
<dbReference type="SUPFAM" id="SSF52540">
    <property type="entry name" value="P-loop containing nucleoside triphosphate hydrolases"/>
    <property type="match status" value="1"/>
</dbReference>
<evidence type="ECO:0000255" key="1"/>
<evidence type="ECO:0000256" key="2">
    <source>
        <dbReference type="SAM" id="MobiDB-lite"/>
    </source>
</evidence>
<evidence type="ECO:0000269" key="3">
    <source>
    </source>
</evidence>
<evidence type="ECO:0000303" key="4">
    <source>
    </source>
</evidence>
<evidence type="ECO:0000305" key="5"/>
<evidence type="ECO:0000305" key="6">
    <source>
    </source>
</evidence>
<evidence type="ECO:0000312" key="7">
    <source>
        <dbReference type="Proteomes" id="UP000000589"/>
    </source>
</evidence>
<sequence length="4749" mass="536436">MKPHSQTSPPSLPMPSTSCRPGQTQKPKAWNWHLDPELWARSVRQQLNTCLHFILEEKKNPWFYTLQSGLVGCSCSGQEHSWDCQMKQEDLKAVVESEQRTLLKLLLSELQSLFSAVMQDGSCEAWRYLHAVLGLLPPYREMLAGQLELLPFLEQLYCWAPKVQARLELDLLDAIDKAFPPDSSLLHSSSHVDCGLWMKRFHRGPPCSACPFVKAQWDRQQKKELATWLRPLTLPELQHCLGIVGAEVALEETPWLDSLSLLPLALATDIPVQYESSDTEQAEGEPAGRKLQVASEAPEEKALKKKSSRTPVLRSQVKSLLERDWTQKKIHFLYLNVVSDRHFNPYKLVAVPPDKVNPEHYIFSPFGILHIHPVEGSEAMTLGTWHRDCALWRELQRIPFFKNCLLRKALTCWKKNVRLCGLHRIQTFLKTHLLSAIPHFGAGMLHINRLLQEFRSVSWLPKEPDRSYELVDLQKAIAKENHKALRVLCHFLNLCTSILQLIHEDTYQMQQGLQERVQNWNRIRKGQGSIYLQRTLCRHLEKKLKQAETWLLKLGKFARLIDYMICQNLVSILEDEISSFIANTLQAPRQNPFLLSQLVFDDNGQLSPMPRVESIIQGLIKSLQSIKTSALKVLQSTDLRTSRDLLYSEDNKDQDSNAEFLMPKFHGKASDAVRLFCGPNVGYVWPWKSHAITDVLEVRGHKLRGQFLHPNYDHVQEDLDKNAGIQQALAVQQSLLEDMRQEVQEFCNKHKWVEGIYEFLKAWSSQKLEDLRGSPINNYVNLVIQLKKWQERVSNMSVELLTKGKLLFLSGHDVQEELGSKLNNMRKNILEQAQNECWSRNQQLMTELTEFLRVFQTISSDIHAIAQCSQKLSEANEQYCQLEERVEYVRSLHDLIRNHCALFIAENETLDIALLDLWEAFQFERSQVSEFLLSKQHAIVPRLQQLMAAALAELEGLLAKALSGPFMDPSQEQRSTEQQLGALEHQFLNILNNFNALCNAYCTFTGYKKPMSPPASGNRPIVLQQRIWRLYRIISENLGEWKCVAFSKFNLSMAREKTDAWLTEAVRLSTALGLQSPVLQRCMRMLEEFRAYLPLLIKLGNLQLQDLNTQSLLRALGLGSLRSLDLLTLGQMLNYPLLEFAERINQVWQYDKERIHAQEILQQMQQYWEGRQLRLLNFILHVPYKPPTSERSKRPALRSPQWELVGKDSGTFLLSDYSSLQDAIQNSLQALFKILAIQKSGQLHKIALEWVAIMYGLGALLEVWVAFQQKWIFLNKVLHEMKIEFPAPELNARFKAMDDQYRTLMRISVADPMVLSLILPNTKRSPYFQGQHLQQMLKAGSGELEAIIMALEDVLYGVCANFPRLFFLSDSELVALLAAPLDTREAQLWAQRCFPHIKAVNFRSKSTKKKINQDSSSSTESAETIAVLAAGGEEVKLQEPLPLHTDLPKWLASLEKCLRFIIVNLLQSCVATRLAQGPSLIKALKAMPQQRQMPMQVYVQHWLDAVQVFPWQCILVAEEVVWRAEMEEALLESRTMHMRSVHVHNLEVLVQFIRSQRSSQDGKSLPSVRQTSLFSTLLVKAVTHRDIAQLLEKNQVSDLTDFHWVRQLKYHLGSSHLNLKSPVQCLTTIASTEPSVSPAACWIDVLGRSFMYNYEYMGPKLGPLPSLMHERQVFILLMALDEVAYGAILGRDGLGKAETVNSLAWTLGRQLVIMPCLPQIEFQCLRNYLNGALQSGAWLLLENVNQLPSSLLSALGQRLDELHYLYAPLYQKASKNISTINPTKPLLLGGGFFEKHQVSMRLGFGCFLTLHSLGPDIPANLHLLLRPVALALPDLQRVAELNLLGAGVQDASQMASRLSKLFSLERELVSGNLPCRLPLLKQVLEHTIQTLNTSQEKKSQQPYDPAASEEAALLRALLHSPLFSILDGLRLQKLQELLCGIFPNASHVLAEPVSHRLIKSVVVEELQQLGLFPASNTVTSLEQLSQALSRASGILLLGPAGSGKSTCWRSLFKIQNRLAAMEHTSTKGFQSVEIVHLYPSVLNSKEYLGWSEGPSWHYGIFPKLLHAAPYCKSVGSEEPSEKFTGIQQWIICDGAPNHAWTDSVTCLLRDPPQLSLPNGQQIARPLGTFFLIEVAEAAGMSPTVLGRCALVWCSGEQTWHSMLSVLMASLPHEYHLQQETITEFNYLAEVLVPSVLRFLTRIGASSQLQVHGHQAVCPGVAEVTSLVRILRALLDPLLHLFEEEKSYTKEDFSGSDLVTQNFKSSKTRVQSDRVNVNKKQRRHLLAISSFLFAIIWSFGAHLPSRHWPLFDDFMKKSISSLPNYPEPPPSALVFDLHVNFEDGTLVPFTGQYLSTHVKGNLGSFQPSSQTEQLLYVVDLLLSNGQPVLLAGEIATGKSAFVEVLVKPNYPVIHSPIHPALNSTHLRHLLSRGVHGQTQASSIPGHHQDSKGSILFLMEDLHLATFDPEKNCQPVLETLRQAMEGTIYAHNTLELQTLQTTVNFLATATVPGYSERPLCPRLYRLFTVLALNSMTQDTLLSRHVPSIQAWLERFPSVEREHTLARALVRASVEAWEAVCKCFMPSPLRPHYRFSPHSVSHILGSLQLLPTRMGSRGFAETFHHQEYLRRVSGLRGTRLTIMMSMRVMVRLWLHEAQRTFCDRLDSDRERSHCAKLLLEVAQNVFCGGPGSESLAKDCEEEEVEEEKVPEVESEEEIAQWETLSNSDSGSEEEEDPYGLQATTGSFLSENSLAPFPRKSVNKENTENVSQMAEQEEDIRDSSSKLQSKTPKHEWQMAPQMDLSLPLLLPVLLFYPQESPSDLVFSLELTLGSNFESPNLYLERQWENLEKQLVATAVRLKMNSGFSQCPVMVQHVAHLVRVLARPQQHALLLSEFRGTGRYTAIILASSICQAHLHYLSVESEEAIFQCLRDASWHAGLLNQPVALLVPEGVNVAIFCRLLALATSGSFPDQYTEADLDNIEEHFPKENIANKHAIKRDTILNRFYQQVCNNLHMFFMVGDNQAQNQLAPTLFLNLLQLTIASVERYEPWDQASLVRIAQFCLENDHSLPLDDGSLKYPDFKHLIPNVANIMARIHVSSACYHKHMCPALPLVTPKTFQDFLDMFLQQQQQMVLQMRMRASRIQTALKTLRLMVERHSTQTSLLTDLEAQLKGSYKSVGICQGQLEQSKIMYRQKMIECQHQESLIENLVRQHDALKAQQEVFLEQMGKAFVGPLSQLRVADFEEIRSYRAPPESVVKVTDALCDLFHQETGWSSAKQLLCTEDFYQELVFFPKEKLTDSELVKLNEALRAPGMSDAALRSVSIPAANLAVWLWAVLRYGLAQRRGLPTGLLLRQVDATLAREQARLGQFQFQAHDLLEQTRSLTKKLEDAQVSHNHVMETLNQAQCGNFQKWPMESALLTPMHMWTTQLQKLQEQAKTVFGDALLCSAAIIYLGPFPPQRRQELLEKWLSLCQGSEEALDPDDVARALRQKSVGVPKNPLLPTRTPFSILTLLSYGSELHQWDRDLKPQAKSARLLGLLLRSHIHFSSSRWPLLIDPSNQAIMWLNPLPPKQNRSLEPSPKESKEKFHVTKQDSGDNTEDELEDENNEEEDEANEQRKEQKAEENKIQGENEQEVQETEKENEPESSGSHSSLPSETQSLPSCLTVLSGTDPELGPQLLEAAANGLPVLLTNVELSLGCQELQWLLSKKNLSPPSVQPGFCLFLSTTFPIHALSRVLGFEMLKGLNVLDLGLNMEILEEQMLHEILCRERPELETRWQDLKIRAADTYEAMKADEEQLLVTLLRQNQKRQKPSKFLRKMVRTQAKICQLNAQMEELEDQKQEVVALWAPYRPVAYHGMAMVEALSPLQNLLPSFCMTSENWLAVIRRAIDSMKSYDSYRGEDLPSHLLRLKIHLARQLLTNTVVALGLIQTPLVGAFGALAMLQVTTKTPKLERLALWPGLSASPSSGHNMQIPGVIRPAWLSSKAWEECGALELLPPFAGLCESLAGHSGVWQDYLSLSSTVLGPAPGPNSEPLSLFQKLILWRVLRPDCLAGALADLTTSLLGRPLDENLGAPTMIFEHIQPTQPILILLPPPGHPTATLHPVTVIRKLAANHEKPQHLHVIALGSEDWDPVSTVVNTLCQAMLQGHWLVLDNCHLMPFWPRELLQPLQGLLDRARVVSDSELLAEPESRSVVTVHRDFRLWLIVPTEASTSLPGMLTQSSMPVFWNQSLELGRILIDSLDSQQGLCTQPLTQTLPLFFLHGLLLHRQLYGLKLQAHRGRWSQVTLTRALQIQEQLWASLGNPSAALLELTASVLYGGSLGDLEDREALVSLTRTCLNPRNMNWDQPHTPQYLLATLMPSPELGELDARTDCKAQMHLLPTPPEPRTCGLNEAPQAWLMRRQSRVLLNALQKCSSTWVPTVCGGIAQRKERQLQQRLAQAKKRLVALQALLTNNRIRSGQCVTPWAVLGPNARRPLEGFLETEVLELKHLVGTLLCDLDCLLQQLKGGTPCTSSRCAKVAQALWAGHLPQPWRSHALAGSQLPWLWLRQLSRRGHLLIRYLDSGMSENANKPERIFHLSAFRHPGRLLLALRWEAVLENSVHNPNLPGHQDSISGSLPPKWQELSNHPLHIWVENGPNPKVPKMGLLLTGLQLQHAEWDQTDGALQDSFSSQPCPLPPVSISTQARRGKDAPVSAGLGMYSCPVYMTGPFGTTKLHSKNILMHLPLPTRLSPDTCIQRRVHVCSPTLT</sequence>
<protein>
    <recommendedName>
        <fullName evidence="4">Dynein heavy chain domain-containing protein 1</fullName>
    </recommendedName>
    <alternativeName>
        <fullName evidence="4">Coiled-coil domain-containing protein 35</fullName>
    </alternativeName>
    <alternativeName>
        <fullName>Dynein heavy chain domain 1-like protein</fullName>
    </alternativeName>
</protein>
<comment type="function">
    <text evidence="6">Essential for the normal function of sperm flagella axonemes.</text>
</comment>
<comment type="subcellular location">
    <subcellularLocation>
        <location evidence="3">Cell projection</location>
        <location evidence="3">Cilium</location>
        <location evidence="3">Flagellum</location>
    </subcellularLocation>
    <text evidence="3">Predominantly concentrated in the mid-piece of the sperm flagella.</text>
</comment>
<comment type="alternative products">
    <event type="alternative splicing"/>
    <isoform>
        <id>D3Z2X2-1</id>
        <name>1</name>
        <sequence type="displayed"/>
    </isoform>
    <isoform>
        <id>D3Z2X2-2</id>
        <name>2</name>
        <sequence type="described" ref="VSP_061656 VSP_061657"/>
    </isoform>
</comment>
<comment type="tissue specificity">
    <text evidence="3">Expressed in spermatozoa (at protein level).</text>
</comment>
<comment type="disruption phenotype">
    <text evidence="3">Knockout male mice are sterile. There is no reduction in the size or weight of testes between wild-type and knockout animals, but sperm concentration, motility rate, and progressive motility are all decreased in knockout mice. The abnormalies are found in sperm flagella, not in sperm head.</text>
</comment>
<comment type="similarity">
    <text evidence="5">Belongs to the dynein heavy chain family.</text>
</comment>
<comment type="sequence caution" evidence="5">
    <conflict type="erroneous initiation">
        <sequence resource="EMBL-CDS" id="BAB32030"/>
    </conflict>
    <text>Truncated N-terminus.</text>
</comment>
<proteinExistence type="evidence at protein level"/>
<reference key="1">
    <citation type="journal article" date="2009" name="PLoS Biol.">
        <title>Lineage-specific biology revealed by a finished genome assembly of the mouse.</title>
        <authorList>
            <person name="Church D.M."/>
            <person name="Goodstadt L."/>
            <person name="Hillier L.W."/>
            <person name="Zody M.C."/>
            <person name="Goldstein S."/>
            <person name="She X."/>
            <person name="Bult C.J."/>
            <person name="Agarwala R."/>
            <person name="Cherry J.L."/>
            <person name="DiCuccio M."/>
            <person name="Hlavina W."/>
            <person name="Kapustin Y."/>
            <person name="Meric P."/>
            <person name="Maglott D."/>
            <person name="Birtle Z."/>
            <person name="Marques A.C."/>
            <person name="Graves T."/>
            <person name="Zhou S."/>
            <person name="Teague B."/>
            <person name="Potamousis K."/>
            <person name="Churas C."/>
            <person name="Place M."/>
            <person name="Herschleb J."/>
            <person name="Runnheim R."/>
            <person name="Forrest D."/>
            <person name="Amos-Landgraf J."/>
            <person name="Schwartz D.C."/>
            <person name="Cheng Z."/>
            <person name="Lindblad-Toh K."/>
            <person name="Eichler E.E."/>
            <person name="Ponting C.P."/>
        </authorList>
    </citation>
    <scope>NUCLEOTIDE SEQUENCE [LARGE SCALE GENOMIC DNA]</scope>
    <source>
        <strain>C57BL/6J</strain>
    </source>
</reference>
<reference key="2">
    <citation type="journal article" date="2005" name="Science">
        <title>The transcriptional landscape of the mammalian genome.</title>
        <authorList>
            <person name="Carninci P."/>
            <person name="Kasukawa T."/>
            <person name="Katayama S."/>
            <person name="Gough J."/>
            <person name="Frith M.C."/>
            <person name="Maeda N."/>
            <person name="Oyama R."/>
            <person name="Ravasi T."/>
            <person name="Lenhard B."/>
            <person name="Wells C."/>
            <person name="Kodzius R."/>
            <person name="Shimokawa K."/>
            <person name="Bajic V.B."/>
            <person name="Brenner S.E."/>
            <person name="Batalov S."/>
            <person name="Forrest A.R."/>
            <person name="Zavolan M."/>
            <person name="Davis M.J."/>
            <person name="Wilming L.G."/>
            <person name="Aidinis V."/>
            <person name="Allen J.E."/>
            <person name="Ambesi-Impiombato A."/>
            <person name="Apweiler R."/>
            <person name="Aturaliya R.N."/>
            <person name="Bailey T.L."/>
            <person name="Bansal M."/>
            <person name="Baxter L."/>
            <person name="Beisel K.W."/>
            <person name="Bersano T."/>
            <person name="Bono H."/>
            <person name="Chalk A.M."/>
            <person name="Chiu K.P."/>
            <person name="Choudhary V."/>
            <person name="Christoffels A."/>
            <person name="Clutterbuck D.R."/>
            <person name="Crowe M.L."/>
            <person name="Dalla E."/>
            <person name="Dalrymple B.P."/>
            <person name="de Bono B."/>
            <person name="Della Gatta G."/>
            <person name="di Bernardo D."/>
            <person name="Down T."/>
            <person name="Engstrom P."/>
            <person name="Fagiolini M."/>
            <person name="Faulkner G."/>
            <person name="Fletcher C.F."/>
            <person name="Fukushima T."/>
            <person name="Furuno M."/>
            <person name="Futaki S."/>
            <person name="Gariboldi M."/>
            <person name="Georgii-Hemming P."/>
            <person name="Gingeras T.R."/>
            <person name="Gojobori T."/>
            <person name="Green R.E."/>
            <person name="Gustincich S."/>
            <person name="Harbers M."/>
            <person name="Hayashi Y."/>
            <person name="Hensch T.K."/>
            <person name="Hirokawa N."/>
            <person name="Hill D."/>
            <person name="Huminiecki L."/>
            <person name="Iacono M."/>
            <person name="Ikeo K."/>
            <person name="Iwama A."/>
            <person name="Ishikawa T."/>
            <person name="Jakt M."/>
            <person name="Kanapin A."/>
            <person name="Katoh M."/>
            <person name="Kawasawa Y."/>
            <person name="Kelso J."/>
            <person name="Kitamura H."/>
            <person name="Kitano H."/>
            <person name="Kollias G."/>
            <person name="Krishnan S.P."/>
            <person name="Kruger A."/>
            <person name="Kummerfeld S.K."/>
            <person name="Kurochkin I.V."/>
            <person name="Lareau L.F."/>
            <person name="Lazarevic D."/>
            <person name="Lipovich L."/>
            <person name="Liu J."/>
            <person name="Liuni S."/>
            <person name="McWilliam S."/>
            <person name="Madan Babu M."/>
            <person name="Madera M."/>
            <person name="Marchionni L."/>
            <person name="Matsuda H."/>
            <person name="Matsuzawa S."/>
            <person name="Miki H."/>
            <person name="Mignone F."/>
            <person name="Miyake S."/>
            <person name="Morris K."/>
            <person name="Mottagui-Tabar S."/>
            <person name="Mulder N."/>
            <person name="Nakano N."/>
            <person name="Nakauchi H."/>
            <person name="Ng P."/>
            <person name="Nilsson R."/>
            <person name="Nishiguchi S."/>
            <person name="Nishikawa S."/>
            <person name="Nori F."/>
            <person name="Ohara O."/>
            <person name="Okazaki Y."/>
            <person name="Orlando V."/>
            <person name="Pang K.C."/>
            <person name="Pavan W.J."/>
            <person name="Pavesi G."/>
            <person name="Pesole G."/>
            <person name="Petrovsky N."/>
            <person name="Piazza S."/>
            <person name="Reed J."/>
            <person name="Reid J.F."/>
            <person name="Ring B.Z."/>
            <person name="Ringwald M."/>
            <person name="Rost B."/>
            <person name="Ruan Y."/>
            <person name="Salzberg S.L."/>
            <person name="Sandelin A."/>
            <person name="Schneider C."/>
            <person name="Schoenbach C."/>
            <person name="Sekiguchi K."/>
            <person name="Semple C.A."/>
            <person name="Seno S."/>
            <person name="Sessa L."/>
            <person name="Sheng Y."/>
            <person name="Shibata Y."/>
            <person name="Shimada H."/>
            <person name="Shimada K."/>
            <person name="Silva D."/>
            <person name="Sinclair B."/>
            <person name="Sperling S."/>
            <person name="Stupka E."/>
            <person name="Sugiura K."/>
            <person name="Sultana R."/>
            <person name="Takenaka Y."/>
            <person name="Taki K."/>
            <person name="Tammoja K."/>
            <person name="Tan S.L."/>
            <person name="Tang S."/>
            <person name="Taylor M.S."/>
            <person name="Tegner J."/>
            <person name="Teichmann S.A."/>
            <person name="Ueda H.R."/>
            <person name="van Nimwegen E."/>
            <person name="Verardo R."/>
            <person name="Wei C.L."/>
            <person name="Yagi K."/>
            <person name="Yamanishi H."/>
            <person name="Zabarovsky E."/>
            <person name="Zhu S."/>
            <person name="Zimmer A."/>
            <person name="Hide W."/>
            <person name="Bult C."/>
            <person name="Grimmond S.M."/>
            <person name="Teasdale R.D."/>
            <person name="Liu E.T."/>
            <person name="Brusic V."/>
            <person name="Quackenbush J."/>
            <person name="Wahlestedt C."/>
            <person name="Mattick J.S."/>
            <person name="Hume D.A."/>
            <person name="Kai C."/>
            <person name="Sasaki D."/>
            <person name="Tomaru Y."/>
            <person name="Fukuda S."/>
            <person name="Kanamori-Katayama M."/>
            <person name="Suzuki M."/>
            <person name="Aoki J."/>
            <person name="Arakawa T."/>
            <person name="Iida J."/>
            <person name="Imamura K."/>
            <person name="Itoh M."/>
            <person name="Kato T."/>
            <person name="Kawaji H."/>
            <person name="Kawagashira N."/>
            <person name="Kawashima T."/>
            <person name="Kojima M."/>
            <person name="Kondo S."/>
            <person name="Konno H."/>
            <person name="Nakano K."/>
            <person name="Ninomiya N."/>
            <person name="Nishio T."/>
            <person name="Okada M."/>
            <person name="Plessy C."/>
            <person name="Shibata K."/>
            <person name="Shiraki T."/>
            <person name="Suzuki S."/>
            <person name="Tagami M."/>
            <person name="Waki K."/>
            <person name="Watahiki A."/>
            <person name="Okamura-Oho Y."/>
            <person name="Suzuki H."/>
            <person name="Kawai J."/>
            <person name="Hayashizaki Y."/>
        </authorList>
    </citation>
    <scope>NUCLEOTIDE SEQUENCE [LARGE SCALE MRNA] OF 727-4749 (ISOFORM 2)</scope>
    <source>
        <strain>C57BL/6J</strain>
        <tissue>Embryonic testis</tissue>
    </source>
</reference>
<reference key="3">
    <citation type="journal article" date="2010" name="Cell">
        <title>A tissue-specific atlas of mouse protein phosphorylation and expression.</title>
        <authorList>
            <person name="Huttlin E.L."/>
            <person name="Jedrychowski M.P."/>
            <person name="Elias J.E."/>
            <person name="Goswami T."/>
            <person name="Rad R."/>
            <person name="Beausoleil S.A."/>
            <person name="Villen J."/>
            <person name="Haas W."/>
            <person name="Sowa M.E."/>
            <person name="Gygi S.P."/>
        </authorList>
    </citation>
    <scope>IDENTIFICATION BY MASS SPECTROMETRY [LARGE SCALE ANALYSIS]</scope>
</reference>
<reference key="4">
    <citation type="journal article" date="2022" name="Am. J. Hum. Genet.">
        <title>Bi-allelic variants in DNHD1 cause flagellar axoneme defects and asthenoteratozoospermia in humans and mice.</title>
        <authorList>
            <person name="Tan C."/>
            <person name="Meng L."/>
            <person name="Lv M."/>
            <person name="He X."/>
            <person name="Sha Y."/>
            <person name="Tang D."/>
            <person name="Tan Y."/>
            <person name="Hu T."/>
            <person name="He W."/>
            <person name="Tu C."/>
            <person name="Nie H."/>
            <person name="Zhang H."/>
            <person name="Du J."/>
            <person name="Lu G."/>
            <person name="Fan L.Q."/>
            <person name="Cao Y."/>
            <person name="Lin G."/>
            <person name="Tan Y.Q."/>
        </authorList>
    </citation>
    <scope>FUNCTION</scope>
    <scope>DISRUPTION PHENOTYPE</scope>
    <scope>SUBCELLULAR LOCATION</scope>
    <scope>TISSUE SPECIFICITY</scope>
</reference>
<accession>D3Z2X2</accession>
<accession>F6YTV1</accession>
<accession>Q9CX41</accession>
<gene>
    <name type="primary">Dnhd1</name>
    <name evidence="4" type="synonym">Ccdc35</name>
</gene>
<feature type="chain" id="PRO_0000456583" description="Dynein heavy chain domain-containing protein 1">
    <location>
        <begin position="1"/>
        <end position="4749"/>
    </location>
</feature>
<feature type="region of interest" description="Disordered" evidence="2">
    <location>
        <begin position="1"/>
        <end position="27"/>
    </location>
</feature>
<feature type="region of interest" description="Disordered" evidence="2">
    <location>
        <begin position="275"/>
        <end position="308"/>
    </location>
</feature>
<feature type="region of interest" description="Disordered" evidence="2">
    <location>
        <begin position="2690"/>
        <end position="2785"/>
    </location>
</feature>
<feature type="region of interest" description="Disordered" evidence="2">
    <location>
        <begin position="3568"/>
        <end position="3667"/>
    </location>
</feature>
<feature type="coiled-coil region" evidence="1">
    <location>
        <begin position="3197"/>
        <end position="3224"/>
    </location>
</feature>
<feature type="coiled-coil region" evidence="1">
    <location>
        <begin position="3594"/>
        <end position="3636"/>
    </location>
</feature>
<feature type="coiled-coil region" evidence="1">
    <location>
        <begin position="3818"/>
        <end position="3838"/>
    </location>
</feature>
<feature type="coiled-coil region" evidence="1">
    <location>
        <begin position="4431"/>
        <end position="4451"/>
    </location>
</feature>
<feature type="compositionally biased region" description="Low complexity" evidence="2">
    <location>
        <begin position="1"/>
        <end position="18"/>
    </location>
</feature>
<feature type="compositionally biased region" description="Acidic residues" evidence="2">
    <location>
        <begin position="2696"/>
        <end position="2716"/>
    </location>
</feature>
<feature type="compositionally biased region" description="Polar residues" evidence="2">
    <location>
        <begin position="2738"/>
        <end position="2749"/>
    </location>
</feature>
<feature type="compositionally biased region" description="Basic and acidic residues" evidence="2">
    <location>
        <begin position="3578"/>
        <end position="3593"/>
    </location>
</feature>
<feature type="compositionally biased region" description="Acidic residues" evidence="2">
    <location>
        <begin position="3595"/>
        <end position="3612"/>
    </location>
</feature>
<feature type="compositionally biased region" description="Basic and acidic residues" evidence="2">
    <location>
        <begin position="3613"/>
        <end position="3628"/>
    </location>
</feature>
<feature type="compositionally biased region" description="Low complexity" evidence="2">
    <location>
        <begin position="3644"/>
        <end position="3655"/>
    </location>
</feature>
<feature type="compositionally biased region" description="Polar residues" evidence="2">
    <location>
        <begin position="3656"/>
        <end position="3667"/>
    </location>
</feature>
<feature type="splice variant" id="VSP_061656" description="In isoform 2.">
    <original>YKKPMSPPASGNRPIVL</original>
    <variation>TEHHHLCFYPGRTLHLR</variation>
    <location>
        <begin position="1007"/>
        <end position="1023"/>
    </location>
</feature>
<feature type="splice variant" id="VSP_061657" description="In isoform 2.">
    <location>
        <begin position="1024"/>
        <end position="4749"/>
    </location>
</feature>
<keyword id="KW-0025">Alternative splicing</keyword>
<keyword id="KW-0966">Cell projection</keyword>
<keyword id="KW-0969">Cilium</keyword>
<keyword id="KW-0175">Coiled coil</keyword>
<keyword id="KW-0217">Developmental protein</keyword>
<keyword id="KW-0282">Flagellum</keyword>
<keyword id="KW-1185">Reference proteome</keyword>